<comment type="function">
    <text>Binds to sialic acid-containing receptors on the cell surface, bringing about the attachment of the virus particle to the cell. This attachment induces virion internalization of about two third of the virus particles through clathrin-dependent endocytosis and about one third through a clathrin- and caveolin-independent pathway. Plays a major role in the determination of host range restriction and virulence. Class I viral fusion protein. Responsible for penetration of the virus into the cell cytoplasm by mediating the fusion of the membrane of the endocytosed virus particle with the endosomal membrane. Low pH in endosomes induces an irreversible conformational change in HA2, releasing the fusion hydrophobic peptide. Several trimers are required to form a competent fusion pore.</text>
</comment>
<comment type="function">
    <text evidence="1">Binds to sialic acid-containing receptors on the cell surface, bringing about the attachment of the virus particle to the cell. This attachment induces virion internalization either through clathrin-dependent endocytosis or through clathrin- and caveolin-independent pathway. Plays a major role in the determination of host range restriction and virulence. Class I viral fusion protein. Responsible for penetration of the virus into the cell cytoplasm by mediating the fusion of the membrane of the endocytosed virus particle with the endosomal membrane. Low pH in endosomes induces an irreversible conformational change in HA2, releasing the fusion hydrophobic peptide. Several trimers are required to form a competent fusion pore.</text>
</comment>
<comment type="subunit">
    <text evidence="1">Homotrimer of disulfide-linked HA1-HA2.</text>
</comment>
<comment type="subcellular location">
    <subcellularLocation>
        <location evidence="1">Virion membrane</location>
        <topology evidence="1">Single-pass type I membrane protein</topology>
    </subcellularLocation>
    <subcellularLocation>
        <location evidence="1">Host apical cell membrane</location>
        <topology evidence="1">Single-pass type I membrane protein</topology>
    </subcellularLocation>
    <text evidence="1">Targeted to the apical plasma membrane in epithelial polarized cells through a signal present in the transmembrane domain. Associated with glycosphingolipid- and cholesterol-enriched detergent-resistant lipid rafts.</text>
</comment>
<comment type="PTM">
    <text evidence="1">Palmitoylated.</text>
</comment>
<comment type="PTM">
    <text evidence="1">In natural infection, inactive HA is matured into HA1 and HA2 outside the cell by one or more trypsin-like, arginine-specific endoprotease secreted by the bronchial epithelial cells. One identified protease that may be involved in this process is secreted in lungs by club cells.</text>
</comment>
<comment type="miscellaneous">
    <text>Major glycoprotein, comprises over 80% of the envelope proteins present in virus particle.</text>
</comment>
<comment type="miscellaneous">
    <text>The extent of infection into host organism is determined by HA. Influenza viruses bud from the apical surface of polarized epithelial cells (e.g. bronchial epithelial cells) into lumen of lungs and are therefore usually pneumotropic. The reason is that HA is cleaved by tryptase clara which is restricted to lungs. However, HAs of H5 and H7 pantropic avian viruses subtypes can be cleaved by furin and subtilisin-type enzymes, allowing the virus to grow in other organs than lungs.</text>
</comment>
<comment type="miscellaneous">
    <text evidence="2">The influenza A genome consist of 8 RNA segments. Genetic variation of hemagglutinin and/or neuraminidase genes results in the emergence of new influenza strains. The mechanism of variation can be the result of point mutations or the result of genetic reassortment between segments of two different strains.</text>
</comment>
<comment type="similarity">
    <text evidence="1">Belongs to the influenza viruses hemagglutinin family.</text>
</comment>
<name>HEMA_I63A4</name>
<protein>
    <recommendedName>
        <fullName evidence="1">Hemagglutinin</fullName>
    </recommendedName>
    <component>
        <recommendedName>
            <fullName evidence="1">Hemagglutinin HA1 chain</fullName>
        </recommendedName>
    </component>
    <component>
        <recommendedName>
            <fullName evidence="1">Hemagglutinin HA2 chain</fullName>
        </recommendedName>
    </component>
</protein>
<accession>P17002</accession>
<accession>Q84006</accession>
<accession>Q84007</accession>
<reference key="1">
    <citation type="journal article" date="1989" name="Virology">
        <title>Evolution of the hemagglutinin of equine H3 influenza viruses.</title>
        <authorList>
            <person name="Kawaoka Y."/>
            <person name="Bean W.J."/>
            <person name="Webster R.G."/>
        </authorList>
    </citation>
    <scope>NUCLEOTIDE SEQUENCE [GENOMIC RNA]</scope>
</reference>
<gene>
    <name evidence="1" type="primary">HA</name>
</gene>
<sequence>MKTTTILILLTHWVHSQNPIGGKNTATLCLGHHAVANGTLVKTITDDQIEVTNATELVQSTSTGKICNNPYRVLDGRNCTLIDAMLGDPHCDVFQYGNWDLFIERSSAFSNCYPYDIPDYASLRSLVASSGTLEFMAEGFTWTGVTQNGRSSACRRGSADSFFSRLNWLTKSGNSYPTLNVTMPNNDNFDKLYIWGIHHPSTNNEQTKLYVQASGRVTVSTKRSQQTIIPNIGSRPWVRGQSGRISIYWTIVKPGDVLMINSNGNLIAPRGYFKMRTGKSSIMRSDAPIDTCVSECITPNGSIPNNKPFQNVNKVTYGKCPKYVKQSTLKLATGMRNVPERQIRGIFGAIAGFIENGWEGMIDGWYGFRYQNSEGTGQAGDLKSTQAAIDQINGKLNRVIGKTNEKFHQIEKEFSEVEGRIQDLEKYVEDTKIDLWSYNAELLVALENQHTIDLTDAEMNKLFEKTRRQLRENAEDMGNGCFKIYHKCDNACIESIRNGTYDHDIYRDEALNNRFQIRGVELKSGYKDWILWISFAISCFLICVVLLGFIMWACQKGNIRCNICI</sequence>
<organism>
    <name type="scientific">Influenza A virus (strain A/Equine/Uruguay/1/1963 H3N8)</name>
    <dbReference type="NCBI Taxonomy" id="387234"/>
    <lineage>
        <taxon>Viruses</taxon>
        <taxon>Riboviria</taxon>
        <taxon>Orthornavirae</taxon>
        <taxon>Negarnaviricota</taxon>
        <taxon>Polyploviricotina</taxon>
        <taxon>Insthoviricetes</taxon>
        <taxon>Articulavirales</taxon>
        <taxon>Orthomyxoviridae</taxon>
        <taxon>Alphainfluenzavirus</taxon>
        <taxon>Alphainfluenzavirus influenzae</taxon>
        <taxon>Influenza A virus</taxon>
    </lineage>
</organism>
<evidence type="ECO:0000255" key="1">
    <source>
        <dbReference type="HAMAP-Rule" id="MF_04072"/>
    </source>
</evidence>
<evidence type="ECO:0000305" key="2"/>
<feature type="signal peptide" evidence="1">
    <location>
        <begin position="1"/>
        <end position="16"/>
    </location>
</feature>
<feature type="chain" id="PRO_0000440403" description="Hemagglutinin" evidence="1">
    <location>
        <begin position="17"/>
        <end position="565"/>
    </location>
</feature>
<feature type="chain" id="PRO_0000039008" description="Hemagglutinin HA1 chain">
    <location>
        <begin position="17"/>
        <end position="343"/>
    </location>
</feature>
<feature type="chain" id="PRO_0000039009" description="Hemagglutinin HA2 chain" evidence="1">
    <location>
        <begin position="345"/>
        <end position="565"/>
    </location>
</feature>
<feature type="topological domain" description="Extracellular" evidence="1">
    <location>
        <begin position="17"/>
        <end position="529"/>
    </location>
</feature>
<feature type="transmembrane region" description="Helical" evidence="1">
    <location>
        <begin position="530"/>
        <end position="550"/>
    </location>
</feature>
<feature type="topological domain" description="Cytoplasmic" evidence="1">
    <location>
        <begin position="551"/>
        <end position="565"/>
    </location>
</feature>
<feature type="site" description="Cleavage; by host" evidence="1">
    <location>
        <begin position="344"/>
        <end position="345"/>
    </location>
</feature>
<feature type="lipid moiety-binding region" description="S-palmitoyl cysteine; by host" evidence="1">
    <location>
        <position position="554"/>
    </location>
</feature>
<feature type="lipid moiety-binding region" description="S-palmitoyl cysteine; by host" evidence="1">
    <location>
        <position position="561"/>
    </location>
</feature>
<feature type="lipid moiety-binding region" description="S-palmitoyl cysteine; by host" evidence="1">
    <location>
        <position position="564"/>
    </location>
</feature>
<feature type="glycosylation site" description="N-linked (GlcNAc...) asparagine; by host" evidence="1">
    <location>
        <position position="37"/>
    </location>
</feature>
<feature type="glycosylation site" description="N-linked (GlcNAc...) asparagine; by host" evidence="1">
    <location>
        <position position="53"/>
    </location>
</feature>
<feature type="glycosylation site" description="N-linked (GlcNAc...) asparagine; by host" evidence="1">
    <location>
        <position position="78"/>
    </location>
</feature>
<feature type="glycosylation site" description="N-linked (GlcNAc...) asparagine; by host" evidence="1">
    <location>
        <position position="180"/>
    </location>
</feature>
<feature type="glycosylation site" description="N-linked (GlcNAc...) asparagine; by host" evidence="1">
    <location>
        <position position="300"/>
    </location>
</feature>
<feature type="glycosylation site" description="N-linked (GlcNAc...) asparagine; by host" evidence="1">
    <location>
        <position position="498"/>
    </location>
</feature>
<feature type="disulfide bond" description="Interchain (between HA1 and HA2 chains)" evidence="1">
    <location>
        <begin position="29"/>
        <end position="481"/>
    </location>
</feature>
<feature type="disulfide bond" evidence="1">
    <location>
        <begin position="67"/>
        <end position="292"/>
    </location>
</feature>
<feature type="disulfide bond" evidence="1">
    <location>
        <begin position="79"/>
        <end position="91"/>
    </location>
</feature>
<feature type="disulfide bond" evidence="1">
    <location>
        <begin position="112"/>
        <end position="154"/>
    </location>
</feature>
<feature type="disulfide bond" evidence="1">
    <location>
        <begin position="296"/>
        <end position="320"/>
    </location>
</feature>
<feature type="disulfide bond" evidence="1">
    <location>
        <begin position="488"/>
        <end position="492"/>
    </location>
</feature>
<keyword id="KW-1167">Clathrin- and caveolin-independent endocytosis of virus by host</keyword>
<keyword id="KW-1165">Clathrin-mediated endocytosis of virus by host</keyword>
<keyword id="KW-1015">Disulfide bond</keyword>
<keyword id="KW-1170">Fusion of virus membrane with host endosomal membrane</keyword>
<keyword id="KW-1168">Fusion of virus membrane with host membrane</keyword>
<keyword id="KW-0325">Glycoprotein</keyword>
<keyword id="KW-0348">Hemagglutinin</keyword>
<keyword id="KW-1032">Host cell membrane</keyword>
<keyword id="KW-1043">Host membrane</keyword>
<keyword id="KW-0945">Host-virus interaction</keyword>
<keyword id="KW-0449">Lipoprotein</keyword>
<keyword id="KW-0472">Membrane</keyword>
<keyword id="KW-0564">Palmitate</keyword>
<keyword id="KW-0732">Signal</keyword>
<keyword id="KW-0812">Transmembrane</keyword>
<keyword id="KW-1133">Transmembrane helix</keyword>
<keyword id="KW-1161">Viral attachment to host cell</keyword>
<keyword id="KW-0261">Viral envelope protein</keyword>
<keyword id="KW-1162">Viral penetration into host cytoplasm</keyword>
<keyword id="KW-0946">Virion</keyword>
<keyword id="KW-1164">Virus endocytosis by host</keyword>
<keyword id="KW-1160">Virus entry into host cell</keyword>
<proteinExistence type="inferred from homology"/>
<dbReference type="EMBL" id="M24718">
    <property type="protein sequence ID" value="AAA43114.1"/>
    <property type="status" value="ALT_SEQ"/>
    <property type="molecule type" value="Genomic_RNA"/>
</dbReference>
<dbReference type="SMR" id="P17002"/>
<dbReference type="GlyCosmos" id="P17002">
    <property type="glycosylation" value="6 sites, No reported glycans"/>
</dbReference>
<dbReference type="GO" id="GO:0020002">
    <property type="term" value="C:host cell plasma membrane"/>
    <property type="evidence" value="ECO:0007669"/>
    <property type="project" value="UniProtKB-SubCell"/>
</dbReference>
<dbReference type="GO" id="GO:0016020">
    <property type="term" value="C:membrane"/>
    <property type="evidence" value="ECO:0007669"/>
    <property type="project" value="UniProtKB-UniRule"/>
</dbReference>
<dbReference type="GO" id="GO:0019031">
    <property type="term" value="C:viral envelope"/>
    <property type="evidence" value="ECO:0007669"/>
    <property type="project" value="UniProtKB-UniRule"/>
</dbReference>
<dbReference type="GO" id="GO:0055036">
    <property type="term" value="C:virion membrane"/>
    <property type="evidence" value="ECO:0007669"/>
    <property type="project" value="UniProtKB-SubCell"/>
</dbReference>
<dbReference type="GO" id="GO:0046789">
    <property type="term" value="F:host cell surface receptor binding"/>
    <property type="evidence" value="ECO:0007669"/>
    <property type="project" value="UniProtKB-UniRule"/>
</dbReference>
<dbReference type="GO" id="GO:0075512">
    <property type="term" value="P:clathrin-dependent endocytosis of virus by host cell"/>
    <property type="evidence" value="ECO:0007669"/>
    <property type="project" value="UniProtKB-UniRule"/>
</dbReference>
<dbReference type="GO" id="GO:0039654">
    <property type="term" value="P:fusion of virus membrane with host endosome membrane"/>
    <property type="evidence" value="ECO:0007669"/>
    <property type="project" value="UniProtKB-UniRule"/>
</dbReference>
<dbReference type="GO" id="GO:0019064">
    <property type="term" value="P:fusion of virus membrane with host plasma membrane"/>
    <property type="evidence" value="ECO:0007669"/>
    <property type="project" value="InterPro"/>
</dbReference>
<dbReference type="GO" id="GO:0046761">
    <property type="term" value="P:viral budding from plasma membrane"/>
    <property type="evidence" value="ECO:0007669"/>
    <property type="project" value="UniProtKB-UniRule"/>
</dbReference>
<dbReference type="GO" id="GO:0019062">
    <property type="term" value="P:virion attachment to host cell"/>
    <property type="evidence" value="ECO:0007669"/>
    <property type="project" value="UniProtKB-KW"/>
</dbReference>
<dbReference type="FunFam" id="3.90.20.10:FF:000001">
    <property type="entry name" value="Hemagglutinin"/>
    <property type="match status" value="1"/>
</dbReference>
<dbReference type="FunFam" id="3.90.209.20:FF:000001">
    <property type="entry name" value="Hemagglutinin"/>
    <property type="match status" value="1"/>
</dbReference>
<dbReference type="Gene3D" id="3.90.20.10">
    <property type="match status" value="1"/>
</dbReference>
<dbReference type="Gene3D" id="3.90.209.20">
    <property type="match status" value="1"/>
</dbReference>
<dbReference type="HAMAP" id="MF_04072">
    <property type="entry name" value="INFV_HEMA"/>
    <property type="match status" value="1"/>
</dbReference>
<dbReference type="InterPro" id="IPR008980">
    <property type="entry name" value="Capsid_hemagglutn"/>
</dbReference>
<dbReference type="InterPro" id="IPR013828">
    <property type="entry name" value="Hemagglutn_HA1_a/b_dom_sf"/>
</dbReference>
<dbReference type="InterPro" id="IPR000149">
    <property type="entry name" value="Hemagglutn_influenz_A"/>
</dbReference>
<dbReference type="InterPro" id="IPR001364">
    <property type="entry name" value="Hemagglutn_influenz_A/B"/>
</dbReference>
<dbReference type="Pfam" id="PF00509">
    <property type="entry name" value="Hemagglutinin"/>
    <property type="match status" value="1"/>
</dbReference>
<dbReference type="PRINTS" id="PR00330">
    <property type="entry name" value="HEMAGGLUTN1"/>
</dbReference>
<dbReference type="PRINTS" id="PR00329">
    <property type="entry name" value="HEMAGGLUTN12"/>
</dbReference>
<dbReference type="SUPFAM" id="SSF58064">
    <property type="entry name" value="Influenza hemagglutinin (stalk)"/>
    <property type="match status" value="1"/>
</dbReference>
<dbReference type="SUPFAM" id="SSF49818">
    <property type="entry name" value="Viral protein domain"/>
    <property type="match status" value="1"/>
</dbReference>
<organismHost>
    <name type="scientific">Aves</name>
    <dbReference type="NCBI Taxonomy" id="8782"/>
</organismHost>
<organismHost>
    <name type="scientific">Equus caballus</name>
    <name type="common">Horse</name>
    <dbReference type="NCBI Taxonomy" id="9796"/>
</organismHost>